<comment type="function">
    <text evidence="2">Esterase that can hydrolyze short-chain esters with the carbon chain containing 2 to 10 carbon atoms. Does not have lipase activity. Is highly immunogenic and elicits strong humoral immune responses in both HIV-negative (HIV-) and HIV-positive (HIV+) tuberculosis (TB) patients. Also elicits pro-inflammatory cytokine and chemokine responses from macrophages and pulmonary epithelial cells (PubMed:22038913). May participate in the progression of active tuberculosis both by contributing to the utilization of lipid substrates for bacterial growth and replication, and by modulating immune responses (PubMed:22038913).</text>
</comment>
<comment type="catalytic activity">
    <reaction evidence="2">
        <text>a fatty acid ester + H2O = an aliphatic alcohol + a fatty acid + H(+)</text>
        <dbReference type="Rhea" id="RHEA:59388"/>
        <dbReference type="ChEBI" id="CHEBI:2571"/>
        <dbReference type="ChEBI" id="CHEBI:15377"/>
        <dbReference type="ChEBI" id="CHEBI:15378"/>
        <dbReference type="ChEBI" id="CHEBI:28868"/>
        <dbReference type="ChEBI" id="CHEBI:35748"/>
    </reaction>
</comment>
<comment type="catalytic activity">
    <reaction evidence="2">
        <text>a butanoate ester + H2O = an aliphatic alcohol + butanoate + H(+)</text>
        <dbReference type="Rhea" id="RHEA:47348"/>
        <dbReference type="ChEBI" id="CHEBI:2571"/>
        <dbReference type="ChEBI" id="CHEBI:15377"/>
        <dbReference type="ChEBI" id="CHEBI:15378"/>
        <dbReference type="ChEBI" id="CHEBI:17968"/>
        <dbReference type="ChEBI" id="CHEBI:50477"/>
    </reaction>
</comment>
<comment type="catalytic activity">
    <reaction evidence="2">
        <text>a hexanoate ester + H2O = an aliphatic alcohol + hexanoate + H(+)</text>
        <dbReference type="Rhea" id="RHEA:47352"/>
        <dbReference type="ChEBI" id="CHEBI:2571"/>
        <dbReference type="ChEBI" id="CHEBI:15377"/>
        <dbReference type="ChEBI" id="CHEBI:15378"/>
        <dbReference type="ChEBI" id="CHEBI:17120"/>
        <dbReference type="ChEBI" id="CHEBI:87656"/>
    </reaction>
</comment>
<comment type="catalytic activity">
    <reaction evidence="2">
        <text>an acetyl ester + H2O = an aliphatic alcohol + acetate + H(+)</text>
        <dbReference type="Rhea" id="RHEA:12957"/>
        <dbReference type="ChEBI" id="CHEBI:2571"/>
        <dbReference type="ChEBI" id="CHEBI:15377"/>
        <dbReference type="ChEBI" id="CHEBI:15378"/>
        <dbReference type="ChEBI" id="CHEBI:30089"/>
        <dbReference type="ChEBI" id="CHEBI:47622"/>
    </reaction>
</comment>
<comment type="catalytic activity">
    <reaction evidence="2">
        <text>an octanoate ester + H2O = an aliphatic alcohol + octanoate + H(+)</text>
        <dbReference type="Rhea" id="RHEA:47356"/>
        <dbReference type="ChEBI" id="CHEBI:2571"/>
        <dbReference type="ChEBI" id="CHEBI:15377"/>
        <dbReference type="ChEBI" id="CHEBI:15378"/>
        <dbReference type="ChEBI" id="CHEBI:25646"/>
        <dbReference type="ChEBI" id="CHEBI:87657"/>
    </reaction>
</comment>
<comment type="catalytic activity">
    <reaction evidence="2">
        <text>decanoate ester + H2O = decanoate + an aliphatic alcohol + H(+)</text>
        <dbReference type="Rhea" id="RHEA:47360"/>
        <dbReference type="ChEBI" id="CHEBI:2571"/>
        <dbReference type="ChEBI" id="CHEBI:15377"/>
        <dbReference type="ChEBI" id="CHEBI:15378"/>
        <dbReference type="ChEBI" id="CHEBI:27689"/>
        <dbReference type="ChEBI" id="CHEBI:87658"/>
    </reaction>
</comment>
<comment type="subcellular location">
    <subcellularLocation>
        <location evidence="2">Cell surface</location>
    </subcellularLocation>
    <subcellularLocation>
        <location evidence="2">Secreted</location>
        <location evidence="2">Cell wall</location>
    </subcellularLocation>
    <subcellularLocation>
        <location evidence="2">Secreted</location>
        <location evidence="2">Capsule</location>
    </subcellularLocation>
    <text evidence="2">Cell surface protein that is present in both the cell wall and the capsule.</text>
</comment>
<comment type="developmental stage">
    <text evidence="2">Expressed only during active M.tuberculosis infection.</text>
</comment>
<comment type="similarity">
    <text evidence="4">Belongs to the 'GDXG' lipolytic enzyme family.</text>
</comment>
<accession>P96402</accession>
<accession>F2GM18</accession>
<accession>I6WXR6</accession>
<accession>Q7DA89</accession>
<gene>
    <name evidence="3" type="primary">lipC</name>
    <name evidence="5" type="ordered locus">Rv0220</name>
</gene>
<protein>
    <recommendedName>
        <fullName evidence="4">Esterase LipC</fullName>
        <ecNumber evidence="2">3.1.1.-</ecNumber>
    </recommendedName>
</protein>
<keyword id="KW-0134">Cell wall</keyword>
<keyword id="KW-0378">Hydrolase</keyword>
<keyword id="KW-1185">Reference proteome</keyword>
<keyword id="KW-0964">Secreted</keyword>
<dbReference type="EC" id="3.1.1.-" evidence="2"/>
<dbReference type="EMBL" id="AL123456">
    <property type="protein sequence ID" value="CCP42948.1"/>
    <property type="molecule type" value="Genomic_DNA"/>
</dbReference>
<dbReference type="RefSeq" id="NP_214734.1">
    <property type="nucleotide sequence ID" value="NC_000962.3"/>
</dbReference>
<dbReference type="RefSeq" id="WP_003899863.1">
    <property type="nucleotide sequence ID" value="NZ_NVQJ01000001.1"/>
</dbReference>
<dbReference type="SMR" id="P96402"/>
<dbReference type="FunCoup" id="P96402">
    <property type="interactions" value="77"/>
</dbReference>
<dbReference type="STRING" id="83332.Rv0220"/>
<dbReference type="ESTHER" id="myctu-Rv0220">
    <property type="family name" value="BD-FAE"/>
</dbReference>
<dbReference type="PaxDb" id="83332-Rv0220"/>
<dbReference type="DNASU" id="886722"/>
<dbReference type="GeneID" id="45424191"/>
<dbReference type="GeneID" id="886722"/>
<dbReference type="KEGG" id="mtu:Rv0220"/>
<dbReference type="KEGG" id="mtv:RVBD_0220"/>
<dbReference type="PATRIC" id="fig|83332.111.peg.251"/>
<dbReference type="TubercuList" id="Rv0220"/>
<dbReference type="eggNOG" id="COG0657">
    <property type="taxonomic scope" value="Bacteria"/>
</dbReference>
<dbReference type="InParanoid" id="P96402"/>
<dbReference type="OrthoDB" id="9803828at2"/>
<dbReference type="PhylomeDB" id="P96402"/>
<dbReference type="Proteomes" id="UP000001584">
    <property type="component" value="Chromosome"/>
</dbReference>
<dbReference type="GO" id="GO:0042603">
    <property type="term" value="C:capsule"/>
    <property type="evidence" value="ECO:0007669"/>
    <property type="project" value="UniProtKB-SubCell"/>
</dbReference>
<dbReference type="GO" id="GO:0009986">
    <property type="term" value="C:cell surface"/>
    <property type="evidence" value="ECO:0007669"/>
    <property type="project" value="UniProtKB-SubCell"/>
</dbReference>
<dbReference type="GO" id="GO:0005576">
    <property type="term" value="C:extracellular region"/>
    <property type="evidence" value="ECO:0007669"/>
    <property type="project" value="UniProtKB-KW"/>
</dbReference>
<dbReference type="GO" id="GO:0008126">
    <property type="term" value="F:acetylesterase activity"/>
    <property type="evidence" value="ECO:0007669"/>
    <property type="project" value="RHEA"/>
</dbReference>
<dbReference type="GO" id="GO:0004806">
    <property type="term" value="F:triacylglycerol lipase activity"/>
    <property type="evidence" value="ECO:0000314"/>
    <property type="project" value="MTBBASE"/>
</dbReference>
<dbReference type="GO" id="GO:0046503">
    <property type="term" value="P:glycerolipid catabolic process"/>
    <property type="evidence" value="ECO:0000314"/>
    <property type="project" value="MTBBASE"/>
</dbReference>
<dbReference type="FunFam" id="3.40.50.1820:FF:000135">
    <property type="entry name" value="Esterase lipC"/>
    <property type="match status" value="1"/>
</dbReference>
<dbReference type="Gene3D" id="3.40.50.1820">
    <property type="entry name" value="alpha/beta hydrolase"/>
    <property type="match status" value="1"/>
</dbReference>
<dbReference type="InterPro" id="IPR029058">
    <property type="entry name" value="AB_hydrolase_fold"/>
</dbReference>
<dbReference type="InterPro" id="IPR049492">
    <property type="entry name" value="BD-FAE-like_dom"/>
</dbReference>
<dbReference type="InterPro" id="IPR019826">
    <property type="entry name" value="Carboxylesterase_B_AS"/>
</dbReference>
<dbReference type="InterPro" id="IPR050300">
    <property type="entry name" value="GDXG_lipolytic_enzyme"/>
</dbReference>
<dbReference type="PANTHER" id="PTHR48081">
    <property type="entry name" value="AB HYDROLASE SUPERFAMILY PROTEIN C4A8.06C"/>
    <property type="match status" value="1"/>
</dbReference>
<dbReference type="PANTHER" id="PTHR48081:SF33">
    <property type="entry name" value="KYNURENINE FORMAMIDASE"/>
    <property type="match status" value="1"/>
</dbReference>
<dbReference type="Pfam" id="PF20434">
    <property type="entry name" value="BD-FAE"/>
    <property type="match status" value="1"/>
</dbReference>
<dbReference type="SUPFAM" id="SSF53474">
    <property type="entry name" value="alpha/beta-Hydrolases"/>
    <property type="match status" value="1"/>
</dbReference>
<dbReference type="PROSITE" id="PS00122">
    <property type="entry name" value="CARBOXYLESTERASE_B_1"/>
    <property type="match status" value="1"/>
</dbReference>
<name>LIPC_MYCTU</name>
<feature type="chain" id="PRO_0000448850" description="Esterase LipC">
    <location>
        <begin position="1"/>
        <end position="403"/>
    </location>
</feature>
<feature type="active site" evidence="1">
    <location>
        <position position="237"/>
    </location>
</feature>
<feature type="active site" evidence="1">
    <location>
        <position position="334"/>
    </location>
</feature>
<feature type="active site" evidence="1">
    <location>
        <position position="367"/>
    </location>
</feature>
<reference key="1">
    <citation type="journal article" date="1998" name="Nature">
        <title>Deciphering the biology of Mycobacterium tuberculosis from the complete genome sequence.</title>
        <authorList>
            <person name="Cole S.T."/>
            <person name="Brosch R."/>
            <person name="Parkhill J."/>
            <person name="Garnier T."/>
            <person name="Churcher C.M."/>
            <person name="Harris D.E."/>
            <person name="Gordon S.V."/>
            <person name="Eiglmeier K."/>
            <person name="Gas S."/>
            <person name="Barry C.E. III"/>
            <person name="Tekaia F."/>
            <person name="Badcock K."/>
            <person name="Basham D."/>
            <person name="Brown D."/>
            <person name="Chillingworth T."/>
            <person name="Connor R."/>
            <person name="Davies R.M."/>
            <person name="Devlin K."/>
            <person name="Feltwell T."/>
            <person name="Gentles S."/>
            <person name="Hamlin N."/>
            <person name="Holroyd S."/>
            <person name="Hornsby T."/>
            <person name="Jagels K."/>
            <person name="Krogh A."/>
            <person name="McLean J."/>
            <person name="Moule S."/>
            <person name="Murphy L.D."/>
            <person name="Oliver S."/>
            <person name="Osborne J."/>
            <person name="Quail M.A."/>
            <person name="Rajandream M.A."/>
            <person name="Rogers J."/>
            <person name="Rutter S."/>
            <person name="Seeger K."/>
            <person name="Skelton S."/>
            <person name="Squares S."/>
            <person name="Squares R."/>
            <person name="Sulston J.E."/>
            <person name="Taylor K."/>
            <person name="Whitehead S."/>
            <person name="Barrell B.G."/>
        </authorList>
    </citation>
    <scope>NUCLEOTIDE SEQUENCE [LARGE SCALE GENOMIC DNA]</scope>
    <source>
        <strain>ATCC 25618 / H37Rv</strain>
    </source>
</reference>
<reference evidence="6" key="2">
    <citation type="journal article" date="2011" name="Mol. Cell. Proteomics">
        <title>Proteogenomic analysis of Mycobacterium tuberculosis by high resolution mass spectrometry.</title>
        <authorList>
            <person name="Kelkar D.S."/>
            <person name="Kumar D."/>
            <person name="Kumar P."/>
            <person name="Balakrishnan L."/>
            <person name="Muthusamy B."/>
            <person name="Yadav A.K."/>
            <person name="Shrivastava P."/>
            <person name="Marimuthu A."/>
            <person name="Anand S."/>
            <person name="Sundaram H."/>
            <person name="Kingsbury R."/>
            <person name="Harsha H.C."/>
            <person name="Nair B."/>
            <person name="Prasad T.S."/>
            <person name="Chauhan D.S."/>
            <person name="Katoch K."/>
            <person name="Katoch V.M."/>
            <person name="Kumar P."/>
            <person name="Chaerkady R."/>
            <person name="Ramachandran S."/>
            <person name="Dash D."/>
            <person name="Pandey A."/>
        </authorList>
    </citation>
    <scope>IDENTIFICATION BY MASS SPECTROMETRY [LARGE SCALE ANALYSIS]</scope>
</reference>
<reference key="3">
    <citation type="journal article" date="2012" name="Infect. Immun.">
        <title>LipC (Rv0220) is an immunogenic cell surface esterase of Mycobacterium tuberculosis.</title>
        <authorList>
            <person name="Shen G."/>
            <person name="Singh K."/>
            <person name="Chandra D."/>
            <person name="Serveau-Avesque C."/>
            <person name="Maurin D."/>
            <person name="Canaan S."/>
            <person name="Singla R."/>
            <person name="Behera D."/>
            <person name="Laal S."/>
        </authorList>
    </citation>
    <scope>FUNCTION</scope>
    <scope>CATALYTIC ACTIVITY</scope>
    <scope>SUBCELLULAR LOCATION</scope>
    <scope>DEVELOPMENTAL STAGE</scope>
    <source>
        <strain>H37Rv</strain>
    </source>
</reference>
<evidence type="ECO:0000250" key="1">
    <source>
        <dbReference type="UniProtKB" id="O06350"/>
    </source>
</evidence>
<evidence type="ECO:0000269" key="2">
    <source>
    </source>
</evidence>
<evidence type="ECO:0000303" key="3">
    <source>
    </source>
</evidence>
<evidence type="ECO:0000305" key="4"/>
<evidence type="ECO:0000312" key="5">
    <source>
        <dbReference type="EMBL" id="CCP42948.1"/>
    </source>
</evidence>
<evidence type="ECO:0007744" key="6">
    <source>
    </source>
</evidence>
<proteinExistence type="evidence at protein level"/>
<sequence length="403" mass="44308">MNQRRAAGSTGVAYIRWLLRARPADYMLALSVAGGSLPVVGKHLKPLGGVTAIGVWGARHASDFLSATAKDLLTPGINEVRRRDRASTQEVSVAALRGIVSPDDLAVEWPAPERTPPVCGALRHRRYVHRRRVLYGDDPAQLLDVWRRKDMPTKPAPVLIFVPGGAWVHGSRAIQGYAVLSRLAAQGWVCLSIDYRVAPHHRWPRHILDVKTAIAWARANVDKFGGDRNFIAVAGCSAGGHLSALAGLTANDPQYQAELPEGSDTSVDAVVGIYGRYDWEDRSTPERARFVDFLERVVVQRTIDRHPEVFRDASPIQRVTRNAPPFLVIHGSRDCVIPVEQARSFVERLRAVSRSQVGYLELPGAGHGFDLLDGARTGPTAHAIALFLNQVHRSRAQFAKEVI</sequence>
<organism>
    <name type="scientific">Mycobacterium tuberculosis (strain ATCC 25618 / H37Rv)</name>
    <dbReference type="NCBI Taxonomy" id="83332"/>
    <lineage>
        <taxon>Bacteria</taxon>
        <taxon>Bacillati</taxon>
        <taxon>Actinomycetota</taxon>
        <taxon>Actinomycetes</taxon>
        <taxon>Mycobacteriales</taxon>
        <taxon>Mycobacteriaceae</taxon>
        <taxon>Mycobacterium</taxon>
        <taxon>Mycobacterium tuberculosis complex</taxon>
    </lineage>
</organism>